<evidence type="ECO:0000250" key="1"/>
<evidence type="ECO:0000255" key="2">
    <source>
        <dbReference type="PROSITE-ProRule" id="PRU00176"/>
    </source>
</evidence>
<evidence type="ECO:0000256" key="3">
    <source>
        <dbReference type="SAM" id="MobiDB-lite"/>
    </source>
</evidence>
<evidence type="ECO:0000269" key="4">
    <source>
    </source>
</evidence>
<evidence type="ECO:0000269" key="5">
    <source>
    </source>
</evidence>
<evidence type="ECO:0000269" key="6">
    <source>
    </source>
</evidence>
<evidence type="ECO:0000303" key="7">
    <source>
    </source>
</evidence>
<evidence type="ECO:0000305" key="8"/>
<evidence type="ECO:0000312" key="9">
    <source>
        <dbReference type="MGI" id="MGI:104732"/>
    </source>
</evidence>
<dbReference type="EMBL" id="Y15131">
    <property type="protein sequence ID" value="CAA75403.1"/>
    <property type="molecule type" value="mRNA"/>
</dbReference>
<dbReference type="EMBL" id="AC132601">
    <property type="status" value="NOT_ANNOTATED_CDS"/>
    <property type="molecule type" value="Genomic_DNA"/>
</dbReference>
<dbReference type="CCDS" id="CCDS30546.1"/>
<dbReference type="RefSeq" id="NP_001159856.1">
    <property type="nucleotide sequence ID" value="NM_001166384.1"/>
</dbReference>
<dbReference type="RefSeq" id="NP_001257442.1">
    <property type="nucleotide sequence ID" value="NM_001270513.1"/>
</dbReference>
<dbReference type="RefSeq" id="NP_001257444.1">
    <property type="nucleotide sequence ID" value="NM_001270515.1"/>
</dbReference>
<dbReference type="RefSeq" id="NP_001257445.1">
    <property type="nucleotide sequence ID" value="NM_001270516.1"/>
</dbReference>
<dbReference type="RefSeq" id="NP_035383.2">
    <property type="nucleotide sequence ID" value="NM_011253.2"/>
</dbReference>
<dbReference type="SMR" id="O35698"/>
<dbReference type="FunCoup" id="O35698">
    <property type="interactions" value="215"/>
</dbReference>
<dbReference type="IntAct" id="O35698">
    <property type="interactions" value="1"/>
</dbReference>
<dbReference type="STRING" id="10090.ENSMUSP00000097930"/>
<dbReference type="iPTMnet" id="O35698"/>
<dbReference type="PhosphoSitePlus" id="O35698"/>
<dbReference type="PaxDb" id="10090-ENSMUSP00000097930"/>
<dbReference type="DNASU" id="19657"/>
<dbReference type="Ensembl" id="ENSMUST00000100360.5">
    <property type="protein sequence ID" value="ENSMUSP00000097930.4"/>
    <property type="gene ID" value="ENSMUSG00000094658.8"/>
</dbReference>
<dbReference type="Ensembl" id="ENSMUST00000169382.3">
    <property type="protein sequence ID" value="ENSMUSP00000129249.3"/>
    <property type="gene ID" value="ENSMUSG00000093987.8"/>
</dbReference>
<dbReference type="Ensembl" id="ENSMUST00000171534.8">
    <property type="protein sequence ID" value="ENSMUSP00000130080.2"/>
    <property type="gene ID" value="ENSMUSG00000094658.8"/>
</dbReference>
<dbReference type="Ensembl" id="ENSMUST00000179508.2">
    <property type="protein sequence ID" value="ENSMUSP00000136939.2"/>
    <property type="gene ID" value="ENSMUSG00000093918.8"/>
</dbReference>
<dbReference type="Ensembl" id="ENSMUST00000180310.2">
    <property type="protein sequence ID" value="ENSMUSP00000137266.2"/>
    <property type="gene ID" value="ENSMUSG00000095948.8"/>
</dbReference>
<dbReference type="Ensembl" id="ENSMUST00000187277.7">
    <property type="protein sequence ID" value="ENSMUSP00000140704.2"/>
    <property type="gene ID" value="ENSMUSG00000093987.8"/>
</dbReference>
<dbReference type="Ensembl" id="ENSMUST00000188091.7">
    <property type="protein sequence ID" value="ENSMUSP00000140216.2"/>
    <property type="gene ID" value="ENSMUSG00000095948.8"/>
</dbReference>
<dbReference type="Ensembl" id="ENSMUST00000189592.7">
    <property type="protein sequence ID" value="ENSMUSP00000139527.2"/>
    <property type="gene ID" value="ENSMUSG00000093918.8"/>
</dbReference>
<dbReference type="Ensembl" id="ENSMUST00000190283.7">
    <property type="protein sequence ID" value="ENSMUSP00000139659.2"/>
    <property type="gene ID" value="ENSMUSG00000095948.8"/>
</dbReference>
<dbReference type="GeneID" id="100862365"/>
<dbReference type="GeneID" id="100862394"/>
<dbReference type="GeneID" id="100862398"/>
<dbReference type="GeneID" id="19657"/>
<dbReference type="KEGG" id="mmu:100862365"/>
<dbReference type="KEGG" id="mmu:100862394"/>
<dbReference type="KEGG" id="mmu:100862398"/>
<dbReference type="KEGG" id="mmu:19657"/>
<dbReference type="UCSC" id="uc009uzq.2">
    <property type="organism name" value="mouse"/>
</dbReference>
<dbReference type="AGR" id="MGI:104732"/>
<dbReference type="CTD" id="100862365"/>
<dbReference type="CTD" id="100862394"/>
<dbReference type="CTD" id="100862398"/>
<dbReference type="CTD" id="19657"/>
<dbReference type="MGI" id="MGI:104732">
    <property type="gene designation" value="Rbmy"/>
</dbReference>
<dbReference type="VEuPathDB" id="HostDB:ENSMUSG00000093918"/>
<dbReference type="VEuPathDB" id="HostDB:ENSMUSG00000093987"/>
<dbReference type="VEuPathDB" id="HostDB:ENSMUSG00000094658"/>
<dbReference type="VEuPathDB" id="HostDB:ENSMUSG00000095948"/>
<dbReference type="eggNOG" id="ENOG502QS9N">
    <property type="taxonomic scope" value="Eukaryota"/>
</dbReference>
<dbReference type="GeneTree" id="ENSGT00940000163524"/>
<dbReference type="HOGENOM" id="CLU_042286_0_0_1"/>
<dbReference type="InParanoid" id="O35698"/>
<dbReference type="OrthoDB" id="87697at9989"/>
<dbReference type="PhylomeDB" id="O35698"/>
<dbReference type="TreeFam" id="TF331833"/>
<dbReference type="BioGRID-ORCS" id="100862365">
    <property type="hits" value="0 hits in 12 CRISPR screens"/>
</dbReference>
<dbReference type="BioGRID-ORCS" id="100862394">
    <property type="hits" value="0 hits in 10 CRISPR screens"/>
</dbReference>
<dbReference type="BioGRID-ORCS" id="100862398">
    <property type="hits" value="0 hits in 17 CRISPR screens"/>
</dbReference>
<dbReference type="BioGRID-ORCS" id="19657">
    <property type="hits" value="1 hit in 26 CRISPR screens"/>
</dbReference>
<dbReference type="PRO" id="PR:O35698"/>
<dbReference type="Proteomes" id="UP000000589">
    <property type="component" value="Chromosome Y"/>
</dbReference>
<dbReference type="RNAct" id="O35698">
    <property type="molecule type" value="protein"/>
</dbReference>
<dbReference type="Bgee" id="ENSMUSG00000093918">
    <property type="expression patterns" value="Expressed in mesodermal cell in embryo and 1 other cell type or tissue"/>
</dbReference>
<dbReference type="GO" id="GO:0001673">
    <property type="term" value="C:male germ cell nucleus"/>
    <property type="evidence" value="ECO:0000314"/>
    <property type="project" value="MGI"/>
</dbReference>
<dbReference type="GO" id="GO:0003723">
    <property type="term" value="F:RNA binding"/>
    <property type="evidence" value="ECO:0007669"/>
    <property type="project" value="UniProtKB-KW"/>
</dbReference>
<dbReference type="GO" id="GO:0002244">
    <property type="term" value="P:hematopoietic progenitor cell differentiation"/>
    <property type="evidence" value="ECO:0000315"/>
    <property type="project" value="MGI"/>
</dbReference>
<dbReference type="GO" id="GO:0006397">
    <property type="term" value="P:mRNA processing"/>
    <property type="evidence" value="ECO:0007669"/>
    <property type="project" value="UniProtKB-KW"/>
</dbReference>
<dbReference type="GO" id="GO:0008380">
    <property type="term" value="P:RNA splicing"/>
    <property type="evidence" value="ECO:0007669"/>
    <property type="project" value="UniProtKB-KW"/>
</dbReference>
<dbReference type="FunFam" id="3.30.70.330:FF:000119">
    <property type="entry name" value="RNA-binding motif protein, X chromosome"/>
    <property type="match status" value="1"/>
</dbReference>
<dbReference type="Gene3D" id="3.30.70.330">
    <property type="match status" value="1"/>
</dbReference>
<dbReference type="InterPro" id="IPR012677">
    <property type="entry name" value="Nucleotide-bd_a/b_plait_sf"/>
</dbReference>
<dbReference type="InterPro" id="IPR035979">
    <property type="entry name" value="RBD_domain_sf"/>
</dbReference>
<dbReference type="InterPro" id="IPR050441">
    <property type="entry name" value="RBM"/>
</dbReference>
<dbReference type="InterPro" id="IPR000504">
    <property type="entry name" value="RRM_dom"/>
</dbReference>
<dbReference type="PANTHER" id="PTHR48034">
    <property type="entry name" value="TRANSFORMER-2 SEX-DETERMINING PROTEIN-RELATED"/>
    <property type="match status" value="1"/>
</dbReference>
<dbReference type="Pfam" id="PF00076">
    <property type="entry name" value="RRM_1"/>
    <property type="match status" value="1"/>
</dbReference>
<dbReference type="SMART" id="SM00360">
    <property type="entry name" value="RRM"/>
    <property type="match status" value="1"/>
</dbReference>
<dbReference type="SUPFAM" id="SSF54928">
    <property type="entry name" value="RNA-binding domain, RBD"/>
    <property type="match status" value="1"/>
</dbReference>
<dbReference type="PROSITE" id="PS50102">
    <property type="entry name" value="RRM"/>
    <property type="match status" value="1"/>
</dbReference>
<keyword id="KW-0010">Activator</keyword>
<keyword id="KW-0507">mRNA processing</keyword>
<keyword id="KW-0508">mRNA splicing</keyword>
<keyword id="KW-0539">Nucleus</keyword>
<keyword id="KW-1185">Reference proteome</keyword>
<keyword id="KW-0694">RNA-binding</keyword>
<protein>
    <recommendedName>
        <fullName evidence="9">RNA-binding motif protein, Y chromosome</fullName>
    </recommendedName>
    <alternativeName>
        <fullName evidence="7">RNA-binding motif protein 1</fullName>
    </alternativeName>
    <alternativeName>
        <fullName evidence="9">RNA-binding motif protein, Y chromosome, family 1 member A1</fullName>
    </alternativeName>
    <alternativeName>
        <fullName>Y chromosome RNA recognition motif 1</fullName>
    </alternativeName>
</protein>
<proteinExistence type="evidence at protein level"/>
<gene>
    <name evidence="9" type="primary">Rbmy</name>
    <name evidence="7" type="synonym">Rbm</name>
    <name evidence="9" type="synonym">Rbmy1a1</name>
</gene>
<feature type="chain" id="PRO_0000341540" description="RNA-binding motif protein, Y chromosome">
    <location>
        <begin position="1"/>
        <end position="380"/>
    </location>
</feature>
<feature type="domain" description="RRM" evidence="2">
    <location>
        <begin position="8"/>
        <end position="86"/>
    </location>
</feature>
<feature type="region of interest" description="Disordered" evidence="3">
    <location>
        <begin position="82"/>
        <end position="226"/>
    </location>
</feature>
<feature type="region of interest" description="Disordered" evidence="3">
    <location>
        <begin position="279"/>
        <end position="358"/>
    </location>
</feature>
<feature type="compositionally biased region" description="Polar residues" evidence="3">
    <location>
        <begin position="166"/>
        <end position="178"/>
    </location>
</feature>
<feature type="compositionally biased region" description="Basic and acidic residues" evidence="3">
    <location>
        <begin position="180"/>
        <end position="190"/>
    </location>
</feature>
<feature type="compositionally biased region" description="Basic and acidic residues" evidence="3">
    <location>
        <begin position="333"/>
        <end position="351"/>
    </location>
</feature>
<feature type="sequence conflict" description="In Ref. 1; CAA75403." evidence="8" ref="1">
    <original>E</original>
    <variation>A</variation>
    <location>
        <position position="183"/>
    </location>
</feature>
<organism>
    <name type="scientific">Mus musculus</name>
    <name type="common">Mouse</name>
    <dbReference type="NCBI Taxonomy" id="10090"/>
    <lineage>
        <taxon>Eukaryota</taxon>
        <taxon>Metazoa</taxon>
        <taxon>Chordata</taxon>
        <taxon>Craniata</taxon>
        <taxon>Vertebrata</taxon>
        <taxon>Euteleostomi</taxon>
        <taxon>Mammalia</taxon>
        <taxon>Eutheria</taxon>
        <taxon>Euarchontoglires</taxon>
        <taxon>Glires</taxon>
        <taxon>Rodentia</taxon>
        <taxon>Myomorpha</taxon>
        <taxon>Muroidea</taxon>
        <taxon>Muridae</taxon>
        <taxon>Murinae</taxon>
        <taxon>Mus</taxon>
        <taxon>Mus</taxon>
    </lineage>
</organism>
<reference key="1">
    <citation type="journal article" date="1998" name="Hum. Mol. Genet.">
        <title>Mouse homologues of the human AZF candidate gene RBM are expressed in spermatogonia and spermatids, and map to a Y chromosome deletion interval associated with a high incidence of sperm abnormalities.</title>
        <authorList>
            <person name="Mahadevaiah S.K."/>
            <person name="Odorisio T."/>
            <person name="Elliott D.J."/>
            <person name="Rattigan A."/>
            <person name="Szot M."/>
            <person name="Laval S.H."/>
            <person name="Washburn L.L."/>
            <person name="McCarrey J.R."/>
            <person name="Cattanach B.M."/>
            <person name="Lovell-Badge R."/>
            <person name="Burgoyne P.S."/>
        </authorList>
    </citation>
    <scope>NUCLEOTIDE SEQUENCE [MRNA]</scope>
    <scope>TISSUE SPECIFICITY</scope>
    <scope>DEVELOPMENTAL STAGE</scope>
</reference>
<reference key="2">
    <citation type="journal article" date="2009" name="PLoS Biol.">
        <title>Lineage-specific biology revealed by a finished genome assembly of the mouse.</title>
        <authorList>
            <person name="Church D.M."/>
            <person name="Goodstadt L."/>
            <person name="Hillier L.W."/>
            <person name="Zody M.C."/>
            <person name="Goldstein S."/>
            <person name="She X."/>
            <person name="Bult C.J."/>
            <person name="Agarwala R."/>
            <person name="Cherry J.L."/>
            <person name="DiCuccio M."/>
            <person name="Hlavina W."/>
            <person name="Kapustin Y."/>
            <person name="Meric P."/>
            <person name="Maglott D."/>
            <person name="Birtle Z."/>
            <person name="Marques A.C."/>
            <person name="Graves T."/>
            <person name="Zhou S."/>
            <person name="Teague B."/>
            <person name="Potamousis K."/>
            <person name="Churas C."/>
            <person name="Place M."/>
            <person name="Herschleb J."/>
            <person name="Runnheim R."/>
            <person name="Forrest D."/>
            <person name="Amos-Landgraf J."/>
            <person name="Schwartz D.C."/>
            <person name="Cheng Z."/>
            <person name="Lindblad-Toh K."/>
            <person name="Eichler E.E."/>
            <person name="Ponting C.P."/>
        </authorList>
    </citation>
    <scope>NUCLEOTIDE SEQUENCE [LARGE SCALE GENOMIC DNA]</scope>
    <source>
        <strain>C57BL/6J</strain>
    </source>
</reference>
<reference key="3">
    <citation type="journal article" date="2000" name="Proc. Natl. Acad. Sci. U.S.A.">
        <title>A mammalian germ cell-specific RNA-binding protein interacts with ubiquitously expressed proteins involved in splice site selection.</title>
        <authorList>
            <person name="Elliott D.J."/>
            <person name="Bourgeois C.F."/>
            <person name="Klink A."/>
            <person name="Stevenin J."/>
            <person name="Cooke H.J."/>
        </authorList>
    </citation>
    <scope>INTERACTION WITH SRSF3; SRSF9; SRSF5 AND SRSF6</scope>
</reference>
<reference key="4">
    <citation type="journal article" date="2002" name="J. Cell Sci.">
        <title>Meiotic sex chromosome inactivation in male mice with targeted disruptions of Xist.</title>
        <authorList>
            <person name="Turner J.M.A."/>
            <person name="Mahadevaiah S.K."/>
            <person name="Elliott D.J."/>
            <person name="Garchon H.-J."/>
            <person name="Pehrson J.R."/>
            <person name="Jaenisch R."/>
            <person name="Burgoyne P.S."/>
        </authorList>
    </citation>
    <scope>DEVELOPMENTAL STAGE</scope>
</reference>
<reference key="5">
    <citation type="journal article" date="2003" name="Cytogenet. Genome Res.">
        <title>Does Rbmy have a role in sperm development in mice?</title>
        <authorList>
            <person name="Szot M."/>
            <person name="Grigoriev V."/>
            <person name="Mahadevaiah S.K."/>
            <person name="Ojarikre O.A."/>
            <person name="Toure A."/>
            <person name="von Glasenapp E."/>
            <person name="Rattigan A."/>
            <person name="Turner J.M.A."/>
            <person name="Elliott D.J."/>
            <person name="Burgoyne P.S."/>
        </authorList>
    </citation>
    <scope>OVEREXPRESSION</scope>
</reference>
<reference key="6">
    <citation type="journal article" date="2004" name="Cytogenet. Genome Res.">
        <authorList>
            <person name="Szot M."/>
            <person name="Grigoriev V."/>
            <person name="Mahadevaiah S.K."/>
            <person name="Ojarikre O.A."/>
            <person name="Toure A."/>
            <person name="von Glasenapp E."/>
            <person name="Rattigan A."/>
            <person name="Turner J.M.A."/>
            <person name="Elliott D.J."/>
            <person name="Burgoyne P.S."/>
        </authorList>
    </citation>
    <scope>ERRATUM OF PUBMED:15051956</scope>
</reference>
<sequence length="380" mass="43216">MAETNQPGKIFIGGLNIKTRQKTLQEIFGRFGPVARVILMRDRETKKSRGFAFLTFRRLADAKNAVKEMNGVILDGKRIKVKQARRPSSLESGSKKRPPSFSRTRGASRILKCGRGGRSRARSGPSCEGNLGGDRYTPNFNVSSSGRHFAVKRNPSSKRDDPPSKRSATSAQTRSNTGLRGREPHRREISRNMPRGEPASSRRDEYPLPRDYGQSSNDRKYESTSRGYCDYGNYHSREESASKVFSDHAGYLGGRDRDFSEYLSGNSYRDTYRSYGRFHEAPSARGGNNRYDDYSNSQDGYGGRGEPYISNRSNIYSSDYERSGRQEVLPPPIDREYFDREGRQERGHSPKDGLYSASRESYSSNTKIWGIPWRSWRKQI</sequence>
<name>RBMY_MOUSE</name>
<comment type="function">
    <text>RNA-binding protein involved in pre-mRNA splicing. Required for sperm development. Acts additively with TRA2B to promote exon 7 inclusion of the survival motor neuron SMN. Binds non-specifically to mRNAs.</text>
</comment>
<comment type="subunit">
    <text evidence="4">Interacts with SRSF3/SRP20, SRSF9/SRP30, SRSF5/SRP40, and SRSF6/SRP55; this interaction inhibits SRSF family member pre-mRNA splicing (PubMed:10823932). Interacts with splicing factor proteins and KHDRBS3.</text>
</comment>
<comment type="subcellular location">
    <subcellularLocation>
        <location evidence="1">Nucleus</location>
    </subcellularLocation>
</comment>
<comment type="tissue specificity">
    <text evidence="6">Testis-specific.</text>
</comment>
<comment type="developmental stage">
    <text evidence="5 6">Only expressed in spermatogonia and early spermatocytes, suggesting that expression is inactivated in the XY body during meiosis.</text>
</comment>
<comment type="miscellaneous">
    <text>The RBMY1 proteins are encoded by repeated regions of the Y chromosome. The exact number of functional copies is unclear and may vary between individuals, and some of them may represent pseudogenes.</text>
</comment>
<comment type="miscellaneous">
    <text>Overexpression of Rbmy proteins in mice carrying the Y(d1) deletion that removes most of the multi-copy Rbmy gene cluster does not have any effect and fails to reduce the frequency of abnormal sperm. These results raize the question of the role of Rbmy proteins in sperm development.</text>
</comment>
<accession>O35698</accession>
<accession>E9Q856</accession>